<keyword id="KW-0326">Glycosidase</keyword>
<keyword id="KW-0378">Hydrolase</keyword>
<keyword id="KW-0574">Periplasm</keyword>
<keyword id="KW-0732">Signal</keyword>
<accession>Q4UZ12</accession>
<feature type="signal peptide" evidence="1">
    <location>
        <begin position="1"/>
        <end position="38"/>
    </location>
</feature>
<feature type="chain" id="PRO_1000064459" description="Periplasmic trehalase">
    <location>
        <begin position="39"/>
        <end position="568"/>
    </location>
</feature>
<feature type="active site" description="Proton donor/acceptor" evidence="1">
    <location>
        <position position="329"/>
    </location>
</feature>
<feature type="active site" description="Proton donor/acceptor" evidence="1">
    <location>
        <position position="511"/>
    </location>
</feature>
<feature type="binding site" evidence="1">
    <location>
        <position position="169"/>
    </location>
    <ligand>
        <name>substrate</name>
    </ligand>
</feature>
<feature type="binding site" evidence="1">
    <location>
        <begin position="176"/>
        <end position="177"/>
    </location>
    <ligand>
        <name>substrate</name>
    </ligand>
</feature>
<feature type="binding site" evidence="1">
    <location>
        <position position="213"/>
    </location>
    <ligand>
        <name>substrate</name>
    </ligand>
</feature>
<feature type="binding site" evidence="1">
    <location>
        <begin position="222"/>
        <end position="224"/>
    </location>
    <ligand>
        <name>substrate</name>
    </ligand>
</feature>
<feature type="binding site" evidence="1">
    <location>
        <begin position="294"/>
        <end position="296"/>
    </location>
    <ligand>
        <name>substrate</name>
    </ligand>
</feature>
<feature type="binding site" evidence="1">
    <location>
        <position position="327"/>
    </location>
    <ligand>
        <name>substrate</name>
    </ligand>
</feature>
<feature type="binding site" evidence="1">
    <location>
        <position position="526"/>
    </location>
    <ligand>
        <name>substrate</name>
    </ligand>
</feature>
<organism>
    <name type="scientific">Xanthomonas campestris pv. campestris (strain 8004)</name>
    <dbReference type="NCBI Taxonomy" id="314565"/>
    <lineage>
        <taxon>Bacteria</taxon>
        <taxon>Pseudomonadati</taxon>
        <taxon>Pseudomonadota</taxon>
        <taxon>Gammaproteobacteria</taxon>
        <taxon>Lysobacterales</taxon>
        <taxon>Lysobacteraceae</taxon>
        <taxon>Xanthomonas</taxon>
    </lineage>
</organism>
<proteinExistence type="inferred from homology"/>
<dbReference type="EC" id="3.2.1.28" evidence="1"/>
<dbReference type="EMBL" id="CP000050">
    <property type="protein sequence ID" value="AAY47711.1"/>
    <property type="molecule type" value="Genomic_DNA"/>
</dbReference>
<dbReference type="SMR" id="Q4UZ12"/>
<dbReference type="CAZy" id="GH37">
    <property type="family name" value="Glycoside Hydrolase Family 37"/>
</dbReference>
<dbReference type="KEGG" id="xcb:XC_0631"/>
<dbReference type="HOGENOM" id="CLU_006451_3_1_6"/>
<dbReference type="Proteomes" id="UP000000420">
    <property type="component" value="Chromosome"/>
</dbReference>
<dbReference type="GO" id="GO:0042597">
    <property type="term" value="C:periplasmic space"/>
    <property type="evidence" value="ECO:0007669"/>
    <property type="project" value="UniProtKB-SubCell"/>
</dbReference>
<dbReference type="GO" id="GO:0004555">
    <property type="term" value="F:alpha,alpha-trehalase activity"/>
    <property type="evidence" value="ECO:0007669"/>
    <property type="project" value="UniProtKB-UniRule"/>
</dbReference>
<dbReference type="GO" id="GO:0071474">
    <property type="term" value="P:cellular hyperosmotic response"/>
    <property type="evidence" value="ECO:0007669"/>
    <property type="project" value="InterPro"/>
</dbReference>
<dbReference type="GO" id="GO:0005993">
    <property type="term" value="P:trehalose catabolic process"/>
    <property type="evidence" value="ECO:0007669"/>
    <property type="project" value="InterPro"/>
</dbReference>
<dbReference type="FunFam" id="1.50.10.10:FF:000003">
    <property type="entry name" value="Cytoplasmic trehalase"/>
    <property type="match status" value="1"/>
</dbReference>
<dbReference type="Gene3D" id="1.50.10.10">
    <property type="match status" value="1"/>
</dbReference>
<dbReference type="HAMAP" id="MF_01060">
    <property type="entry name" value="Peripl_trehalase"/>
    <property type="match status" value="1"/>
</dbReference>
<dbReference type="InterPro" id="IPR008928">
    <property type="entry name" value="6-hairpin_glycosidase_sf"/>
</dbReference>
<dbReference type="InterPro" id="IPR012341">
    <property type="entry name" value="6hp_glycosidase-like_sf"/>
</dbReference>
<dbReference type="InterPro" id="IPR001661">
    <property type="entry name" value="Glyco_hydro_37"/>
</dbReference>
<dbReference type="InterPro" id="IPR018232">
    <property type="entry name" value="Glyco_hydro_37_CS"/>
</dbReference>
<dbReference type="InterPro" id="IPR023720">
    <property type="entry name" value="Trehalase_periplasmic"/>
</dbReference>
<dbReference type="NCBIfam" id="NF009773">
    <property type="entry name" value="PRK13270.1"/>
    <property type="match status" value="1"/>
</dbReference>
<dbReference type="NCBIfam" id="NF009774">
    <property type="entry name" value="PRK13271.1"/>
    <property type="match status" value="1"/>
</dbReference>
<dbReference type="NCBIfam" id="NF009775">
    <property type="entry name" value="PRK13272.1"/>
    <property type="match status" value="1"/>
</dbReference>
<dbReference type="PANTHER" id="PTHR23403">
    <property type="entry name" value="TREHALASE"/>
    <property type="match status" value="1"/>
</dbReference>
<dbReference type="PANTHER" id="PTHR23403:SF1">
    <property type="entry name" value="TREHALASE"/>
    <property type="match status" value="1"/>
</dbReference>
<dbReference type="Pfam" id="PF01204">
    <property type="entry name" value="Trehalase"/>
    <property type="match status" value="1"/>
</dbReference>
<dbReference type="PRINTS" id="PR00744">
    <property type="entry name" value="GLHYDRLASE37"/>
</dbReference>
<dbReference type="SUPFAM" id="SSF48208">
    <property type="entry name" value="Six-hairpin glycosidases"/>
    <property type="match status" value="1"/>
</dbReference>
<dbReference type="PROSITE" id="PS00927">
    <property type="entry name" value="TREHALASE_1"/>
    <property type="match status" value="1"/>
</dbReference>
<dbReference type="PROSITE" id="PS00928">
    <property type="entry name" value="TREHALASE_2"/>
    <property type="match status" value="1"/>
</dbReference>
<evidence type="ECO:0000255" key="1">
    <source>
        <dbReference type="HAMAP-Rule" id="MF_01060"/>
    </source>
</evidence>
<name>TREA_XANC8</name>
<protein>
    <recommendedName>
        <fullName evidence="1">Periplasmic trehalase</fullName>
        <ecNumber evidence="1">3.2.1.28</ecNumber>
    </recommendedName>
    <alternativeName>
        <fullName evidence="1">Alpha,alpha-trehalase</fullName>
    </alternativeName>
    <alternativeName>
        <fullName evidence="1">Alpha,alpha-trehalose glucohydrolase</fullName>
    </alternativeName>
</protein>
<sequence length="568" mass="62692">MPHAPARSGDAMSAAAPPCCTSLLGLSLSMFVAPCALAATPLEGAVVSAPAPTPPTPDLAYPELFQAVQRGELFDDQKHFVDFLPLRDPALINADYLAQHEHAGFDLRKFVDANFEESPPVQTDAIRQDTALREHIDALWPKLVRSQTNVPAHSSLLALPHPYVVPGGRFREVYYWDSYFTMLGLVKSGETTLSRQMLDNFAYLIDTYGHIPNGNRTYYLSRSQPPLFSYMVELQAGVEGEAVYQRYLPQLQKEYAYWMQGGDDLQPGQAARHVVRLADGSVLNRYWDERDTPRPEAWLHDTRTAAEAHDRPAADVYRDLRAGAESGWDYTSRWLADGKTLSTIRTTAIVPIDLNSLLYHLERTLAQACAHTGTACSQDYAALAQQRKQAIDAHLWNAAGYYADYDWQTRTLSNQVTAAALYPLFAGLASDDHAKRTATSVRARLLRPGGLATTALKTGQQWDEPNGWAPLQWVAVDGLRRYGEDGLARTIGERFLTQVQALFAREHKLVEKYGLDADAAGGGGGEYALQDGFGWTNGVTLMLLNLYPSQGATQAPAKTKRKPEPAAP</sequence>
<reference key="1">
    <citation type="journal article" date="2005" name="Genome Res.">
        <title>Comparative and functional genomic analyses of the pathogenicity of phytopathogen Xanthomonas campestris pv. campestris.</title>
        <authorList>
            <person name="Qian W."/>
            <person name="Jia Y."/>
            <person name="Ren S.-X."/>
            <person name="He Y.-Q."/>
            <person name="Feng J.-X."/>
            <person name="Lu L.-F."/>
            <person name="Sun Q."/>
            <person name="Ying G."/>
            <person name="Tang D.-J."/>
            <person name="Tang H."/>
            <person name="Wu W."/>
            <person name="Hao P."/>
            <person name="Wang L."/>
            <person name="Jiang B.-L."/>
            <person name="Zeng S."/>
            <person name="Gu W.-Y."/>
            <person name="Lu G."/>
            <person name="Rong L."/>
            <person name="Tian Y."/>
            <person name="Yao Z."/>
            <person name="Fu G."/>
            <person name="Chen B."/>
            <person name="Fang R."/>
            <person name="Qiang B."/>
            <person name="Chen Z."/>
            <person name="Zhao G.-P."/>
            <person name="Tang J.-L."/>
            <person name="He C."/>
        </authorList>
    </citation>
    <scope>NUCLEOTIDE SEQUENCE [LARGE SCALE GENOMIC DNA]</scope>
    <source>
        <strain>8004</strain>
    </source>
</reference>
<gene>
    <name evidence="1" type="primary">treA</name>
    <name type="ordered locus">XC_0631</name>
</gene>
<comment type="function">
    <text evidence="1">Provides the cells with the ability to utilize trehalose at high osmolarity by splitting it into glucose molecules that can subsequently be taken up by the phosphotransferase-mediated uptake system.</text>
</comment>
<comment type="catalytic activity">
    <reaction evidence="1">
        <text>alpha,alpha-trehalose + H2O = alpha-D-glucose + beta-D-glucose</text>
        <dbReference type="Rhea" id="RHEA:32675"/>
        <dbReference type="ChEBI" id="CHEBI:15377"/>
        <dbReference type="ChEBI" id="CHEBI:15903"/>
        <dbReference type="ChEBI" id="CHEBI:16551"/>
        <dbReference type="ChEBI" id="CHEBI:17925"/>
        <dbReference type="EC" id="3.2.1.28"/>
    </reaction>
</comment>
<comment type="subcellular location">
    <subcellularLocation>
        <location evidence="1">Periplasm</location>
    </subcellularLocation>
</comment>
<comment type="similarity">
    <text evidence="1">Belongs to the glycosyl hydrolase 37 family.</text>
</comment>